<dbReference type="EMBL" id="AP001918">
    <property type="protein sequence ID" value="BAA97898.1"/>
    <property type="molecule type" value="Genomic_DNA"/>
</dbReference>
<dbReference type="RefSeq" id="NP_061407.1">
    <property type="nucleotide sequence ID" value="NC_002483.1"/>
</dbReference>
<dbReference type="RefSeq" id="WP_000995793.1">
    <property type="nucleotide sequence ID" value="NZ_JACASP010000051.1"/>
</dbReference>
<dbReference type="SMR" id="Q9JMS3"/>
<dbReference type="KEGG" id="ecoc:C3026_24255"/>
<dbReference type="PhylomeDB" id="Q9JMS3"/>
<dbReference type="GO" id="GO:0009279">
    <property type="term" value="C:cell outer membrane"/>
    <property type="evidence" value="ECO:0007669"/>
    <property type="project" value="UniProtKB-SubCell"/>
</dbReference>
<dbReference type="CDD" id="cd01344">
    <property type="entry name" value="PL2_Passenger_AT"/>
    <property type="match status" value="1"/>
</dbReference>
<dbReference type="Gene3D" id="2.160.20.20">
    <property type="match status" value="1"/>
</dbReference>
<dbReference type="Gene3D" id="2.40.128.130">
    <property type="entry name" value="Autotransporter beta-domain"/>
    <property type="match status" value="1"/>
</dbReference>
<dbReference type="InterPro" id="IPR043990">
    <property type="entry name" value="AC_1"/>
</dbReference>
<dbReference type="InterPro" id="IPR005546">
    <property type="entry name" value="Autotransporte_beta"/>
</dbReference>
<dbReference type="InterPro" id="IPR036709">
    <property type="entry name" value="Autotransporte_beta_dom_sf"/>
</dbReference>
<dbReference type="InterPro" id="IPR012332">
    <property type="entry name" value="Autotransporter_pectin_lyase_C"/>
</dbReference>
<dbReference type="InterPro" id="IPR050909">
    <property type="entry name" value="Bact_Autotransporter_VF"/>
</dbReference>
<dbReference type="InterPro" id="IPR006315">
    <property type="entry name" value="OM_autotransptr_brl_dom"/>
</dbReference>
<dbReference type="InterPro" id="IPR011050">
    <property type="entry name" value="Pectin_lyase_fold/virulence"/>
</dbReference>
<dbReference type="NCBIfam" id="TIGR01414">
    <property type="entry name" value="autotrans_barl"/>
    <property type="match status" value="1"/>
</dbReference>
<dbReference type="PANTHER" id="PTHR12338:SF5">
    <property type="entry name" value="ANTIGEN 43-RELATED"/>
    <property type="match status" value="1"/>
</dbReference>
<dbReference type="PANTHER" id="PTHR12338">
    <property type="entry name" value="AUTOTRANSPORTER"/>
    <property type="match status" value="1"/>
</dbReference>
<dbReference type="Pfam" id="PF18883">
    <property type="entry name" value="AC_1"/>
    <property type="match status" value="1"/>
</dbReference>
<dbReference type="Pfam" id="PF03797">
    <property type="entry name" value="Autotransporter"/>
    <property type="match status" value="1"/>
</dbReference>
<dbReference type="SMART" id="SM00869">
    <property type="entry name" value="Autotransporter"/>
    <property type="match status" value="1"/>
</dbReference>
<dbReference type="SUPFAM" id="SSF103515">
    <property type="entry name" value="Autotransporter"/>
    <property type="match status" value="1"/>
</dbReference>
<dbReference type="SUPFAM" id="SSF51126">
    <property type="entry name" value="Pectin lyase-like"/>
    <property type="match status" value="1"/>
</dbReference>
<dbReference type="PROSITE" id="PS51208">
    <property type="entry name" value="AUTOTRANSPORTER"/>
    <property type="match status" value="1"/>
</dbReference>
<keyword id="KW-0998">Cell outer membrane</keyword>
<keyword id="KW-0472">Membrane</keyword>
<keyword id="KW-0614">Plasmid</keyword>
<keyword id="KW-0812">Transmembrane</keyword>
<keyword id="KW-1134">Transmembrane beta strand</keyword>
<sequence length="1371" mass="143692">MNCQRYFCFVNGIVEIRTAPEEYQNKPVLVGSQSDGLLIIDNHADIEDGIFSTLHIGNGYNGAVDVINGAALHMDNRSGSAPLIVGAFGNDIAGKLNISGRNSIVSYRDTPSSSGHNESIYVGFGPGATGWINIFNGGVFEVLNSTNIYVGSDTPGGGDGSIVIDGSNSKMTADFSEAYVGLYGNGDISLKNGGQLSASNLYIGGNGRAIVNISGTDSRLIANMITISGSSGAPGIYIADQGILNVDNYINITTANDTKGKLFINSDMPGTIESKGILFGVGKAELIFKHNSDNYAFSSPLISKNTGNGIINAESGETHLTGDNTDYSGLLNILPTASIDISSQKNIGKSVIVNNGVLQITSQDDWTFNNNMTGNGYLNVHTGGHNFAFQNSTNTQEFTGTLALSDTLFDLSDDNTTALTSALVLAGVGSVITAGTGTQVINGFSFDGGAVNFGAVTQGAQQTESQIQVTDNLYINGNGAVRVSTPTDVNGIPQVINSSLSLLEQDDSNATIKLVDASSAVVKGNGGNLQLQDASGQVISSGKQRNIVQQGKNVAKGVYDYRLTSGPHNDGLYIGYALTQLDLLASGVDALVLDAAGTTGNAADMSARITGAGDLAFNSQKGETVSLSNQDNDYTGVTAIRGGNVLMNSNSVLGQTSEIRLATDTRLDMNGHSQTVGKLNGAAGSVLNINGGNLTLTDDGVSAGTLTGGGFLNISGGVLDITGGNHTFAVSTIIAKDATVRMNDVSGLGTGNISNAGTLSLTHASGLLSNNLSGSGTVSLINSDTQISGNNSNYSGLFVVDTSSQLTATGAQNLGIASVSNRGILQLNNTTDWQLINNVTGTGNVRKTGSGSLTVRSNAAWSGQTDIDDGSLILGQSDAPVMLASSLVNIAKNGKLTGFGGVVGNVTNSGSLDLRSAAPGNILTIGGNYTGNNGTLLINTVLDDSSSATDKLVIKGDASGKTRVAVTNVGGSGANTLNSIEVIHVDGNAANAEFIQAGRIAAGAYDYTLGRGPGSNYGNWYLSSSKNTPEPRPDPEPTPEGHDNNLRPEASSYTANIAAANTMFVTRLHERLGQTQYVDAITGEPKATSMWMRHEGGHNRWRDGSGQLKTQSNRYVIQLGGDIAQWDWGGTNRWHLGVMAGYGNNHSSTGAVRTGYHSKGSVNGYSTGLYATWYADDETHNGAYLDTWAQYGWFDNHVKGDGLPGESWKSKGLTASLETGYAWKIGEFSSNYGNLNEWYVQPQAQLVWMGVKADELYESNGTLIESTGDGNVHTRLGVKTWIKRLNKMDDGKSREFSPFVEVNWLHNTRDFGVRMNGEPVYQDGTRNIGEVKTGVEGQINPHLNLWGNVRVQVGDKGYNDTSAMLGVKYTF</sequence>
<reference key="1">
    <citation type="submission" date="2000-04" db="EMBL/GenBank/DDBJ databases">
        <title>Complete nucleotide sequence of the F plasmid: its implications for organization and diversification of plasmid genomes.</title>
        <authorList>
            <person name="Shimizu H."/>
            <person name="Saitoh Y."/>
            <person name="Suda Y."/>
            <person name="Uehara K."/>
            <person name="Sampei G."/>
            <person name="Mizobuchi K."/>
        </authorList>
    </citation>
    <scope>NUCLEOTIDE SEQUENCE [LARGE SCALE GENOMIC DNA]</scope>
    <source>
        <strain>K12 / CR63</strain>
    </source>
</reference>
<geneLocation type="plasmid">
    <name>F</name>
</geneLocation>
<feature type="chain" id="PRO_0000268022" description="Uncharacterized protein YuaQ">
    <location>
        <begin position="1"/>
        <end position="1371"/>
    </location>
</feature>
<feature type="domain" description="Autotransporter" evidence="1">
    <location>
        <begin position="1083"/>
        <end position="1371"/>
    </location>
</feature>
<feature type="region of interest" description="Disordered" evidence="2">
    <location>
        <begin position="1020"/>
        <end position="1048"/>
    </location>
</feature>
<feature type="compositionally biased region" description="Basic and acidic residues" evidence="2">
    <location>
        <begin position="1029"/>
        <end position="1046"/>
    </location>
</feature>
<comment type="subcellular location">
    <subcellularLocation>
        <location evidence="3">Cell outer membrane</location>
        <topology evidence="3">Peripheral membrane protein</topology>
    </subcellularLocation>
</comment>
<accession>Q9JMS3</accession>
<proteinExistence type="predicted"/>
<name>YUAQ_ECOLI</name>
<gene>
    <name type="primary">yuaQ</name>
    <name type="synonym">ychA</name>
    <name type="ordered locus">ECOK12F028</name>
</gene>
<protein>
    <recommendedName>
        <fullName>Uncharacterized protein YuaQ</fullName>
    </recommendedName>
</protein>
<evidence type="ECO:0000255" key="1">
    <source>
        <dbReference type="PROSITE-ProRule" id="PRU00556"/>
    </source>
</evidence>
<evidence type="ECO:0000256" key="2">
    <source>
        <dbReference type="SAM" id="MobiDB-lite"/>
    </source>
</evidence>
<evidence type="ECO:0000305" key="3"/>
<organism>
    <name type="scientific">Escherichia coli (strain K12)</name>
    <dbReference type="NCBI Taxonomy" id="83333"/>
    <lineage>
        <taxon>Bacteria</taxon>
        <taxon>Pseudomonadati</taxon>
        <taxon>Pseudomonadota</taxon>
        <taxon>Gammaproteobacteria</taxon>
        <taxon>Enterobacterales</taxon>
        <taxon>Enterobacteriaceae</taxon>
        <taxon>Escherichia</taxon>
    </lineage>
</organism>